<protein>
    <recommendedName>
        <fullName evidence="1">Phospho-N-acetylmuramoyl-pentapeptide-transferase</fullName>
        <ecNumber evidence="1">2.7.8.13</ecNumber>
    </recommendedName>
    <alternativeName>
        <fullName evidence="1">UDP-MurNAc-pentapeptide phosphotransferase</fullName>
    </alternativeName>
</protein>
<gene>
    <name evidence="1" type="primary">mraY</name>
    <name type="ordered locus">DP2900</name>
</gene>
<keyword id="KW-0131">Cell cycle</keyword>
<keyword id="KW-0132">Cell division</keyword>
<keyword id="KW-0997">Cell inner membrane</keyword>
<keyword id="KW-1003">Cell membrane</keyword>
<keyword id="KW-0133">Cell shape</keyword>
<keyword id="KW-0961">Cell wall biogenesis/degradation</keyword>
<keyword id="KW-0460">Magnesium</keyword>
<keyword id="KW-0472">Membrane</keyword>
<keyword id="KW-0479">Metal-binding</keyword>
<keyword id="KW-0573">Peptidoglycan synthesis</keyword>
<keyword id="KW-1185">Reference proteome</keyword>
<keyword id="KW-0808">Transferase</keyword>
<keyword id="KW-0812">Transmembrane</keyword>
<keyword id="KW-1133">Transmembrane helix</keyword>
<sequence length="359" mass="39340">MFYHLLYPLHTAFAGFNVFRYITLRSIGAAVCAFLLVLFLGPLFIRTMQRLQIGQVVREDGPETHFKKKGVPTMGGLLILLSVTVSTLLWARLDNPLIWLVLLVTLFFGMIGAYDDYKKISKKTSEGLSAKGKLLLQIAGALIVGFFVYLHPGYDGQLSIPFMKNVQPDLGWFYIVFAVIVIVGASNAVNLTDGLDGLAAGPMVVSSAVYLLFAYLAGNVVLANYLHIPYVAGSGELAIFCGTLFGACLGFLWFNAHPAQMFMGDVGSLALGGALGSIAIIIKQEFLLAIVGGVFVMEALSVMLQVGYFRMSKGKRIFLMAPFHHHFEKKGWSEPKVVVRFWIVSIILGLFAIATLKLR</sequence>
<organism>
    <name type="scientific">Desulfotalea psychrophila (strain LSv54 / DSM 12343)</name>
    <dbReference type="NCBI Taxonomy" id="177439"/>
    <lineage>
        <taxon>Bacteria</taxon>
        <taxon>Pseudomonadati</taxon>
        <taxon>Thermodesulfobacteriota</taxon>
        <taxon>Desulfobulbia</taxon>
        <taxon>Desulfobulbales</taxon>
        <taxon>Desulfocapsaceae</taxon>
        <taxon>Desulfotalea</taxon>
    </lineage>
</organism>
<evidence type="ECO:0000255" key="1">
    <source>
        <dbReference type="HAMAP-Rule" id="MF_00038"/>
    </source>
</evidence>
<name>MRAY_DESPS</name>
<proteinExistence type="inferred from homology"/>
<feature type="chain" id="PRO_0000108818" description="Phospho-N-acetylmuramoyl-pentapeptide-transferase">
    <location>
        <begin position="1"/>
        <end position="359"/>
    </location>
</feature>
<feature type="transmembrane region" description="Helical" evidence="1">
    <location>
        <begin position="27"/>
        <end position="47"/>
    </location>
</feature>
<feature type="transmembrane region" description="Helical" evidence="1">
    <location>
        <begin position="71"/>
        <end position="91"/>
    </location>
</feature>
<feature type="transmembrane region" description="Helical" evidence="1">
    <location>
        <begin position="93"/>
        <end position="113"/>
    </location>
</feature>
<feature type="transmembrane region" description="Helical" evidence="1">
    <location>
        <begin position="134"/>
        <end position="154"/>
    </location>
</feature>
<feature type="transmembrane region" description="Helical" evidence="1">
    <location>
        <begin position="170"/>
        <end position="190"/>
    </location>
</feature>
<feature type="transmembrane region" description="Helical" evidence="1">
    <location>
        <begin position="203"/>
        <end position="223"/>
    </location>
</feature>
<feature type="transmembrane region" description="Helical" evidence="1">
    <location>
        <begin position="234"/>
        <end position="254"/>
    </location>
</feature>
<feature type="transmembrane region" description="Helical" evidence="1">
    <location>
        <begin position="262"/>
        <end position="282"/>
    </location>
</feature>
<feature type="transmembrane region" description="Helical" evidence="1">
    <location>
        <begin position="286"/>
        <end position="306"/>
    </location>
</feature>
<feature type="transmembrane region" description="Helical" evidence="1">
    <location>
        <begin position="336"/>
        <end position="356"/>
    </location>
</feature>
<comment type="function">
    <text evidence="1">Catalyzes the initial step of the lipid cycle reactions in the biosynthesis of the cell wall peptidoglycan: transfers peptidoglycan precursor phospho-MurNAc-pentapeptide from UDP-MurNAc-pentapeptide onto the lipid carrier undecaprenyl phosphate, yielding undecaprenyl-pyrophosphoryl-MurNAc-pentapeptide, known as lipid I.</text>
</comment>
<comment type="catalytic activity">
    <reaction evidence="1">
        <text>UDP-N-acetyl-alpha-D-muramoyl-L-alanyl-gamma-D-glutamyl-meso-2,6-diaminopimeloyl-D-alanyl-D-alanine + di-trans,octa-cis-undecaprenyl phosphate = di-trans,octa-cis-undecaprenyl diphospho-N-acetyl-alpha-D-muramoyl-L-alanyl-D-glutamyl-meso-2,6-diaminopimeloyl-D-alanyl-D-alanine + UMP</text>
        <dbReference type="Rhea" id="RHEA:28386"/>
        <dbReference type="ChEBI" id="CHEBI:57865"/>
        <dbReference type="ChEBI" id="CHEBI:60392"/>
        <dbReference type="ChEBI" id="CHEBI:61386"/>
        <dbReference type="ChEBI" id="CHEBI:61387"/>
        <dbReference type="EC" id="2.7.8.13"/>
    </reaction>
</comment>
<comment type="cofactor">
    <cofactor evidence="1">
        <name>Mg(2+)</name>
        <dbReference type="ChEBI" id="CHEBI:18420"/>
    </cofactor>
</comment>
<comment type="pathway">
    <text evidence="1">Cell wall biogenesis; peptidoglycan biosynthesis.</text>
</comment>
<comment type="subcellular location">
    <subcellularLocation>
        <location evidence="1">Cell inner membrane</location>
        <topology evidence="1">Multi-pass membrane protein</topology>
    </subcellularLocation>
</comment>
<comment type="similarity">
    <text evidence="1">Belongs to the glycosyltransferase 4 family. MraY subfamily.</text>
</comment>
<dbReference type="EC" id="2.7.8.13" evidence="1"/>
<dbReference type="EMBL" id="CR522870">
    <property type="protein sequence ID" value="CAG37629.1"/>
    <property type="molecule type" value="Genomic_DNA"/>
</dbReference>
<dbReference type="RefSeq" id="WP_011190141.1">
    <property type="nucleotide sequence ID" value="NC_006138.1"/>
</dbReference>
<dbReference type="SMR" id="Q6AJ51"/>
<dbReference type="STRING" id="177439.DP2900"/>
<dbReference type="KEGG" id="dps:DP2900"/>
<dbReference type="eggNOG" id="COG0472">
    <property type="taxonomic scope" value="Bacteria"/>
</dbReference>
<dbReference type="HOGENOM" id="CLU_023982_0_0_7"/>
<dbReference type="OrthoDB" id="9805475at2"/>
<dbReference type="UniPathway" id="UPA00219"/>
<dbReference type="Proteomes" id="UP000000602">
    <property type="component" value="Chromosome"/>
</dbReference>
<dbReference type="GO" id="GO:0005886">
    <property type="term" value="C:plasma membrane"/>
    <property type="evidence" value="ECO:0007669"/>
    <property type="project" value="UniProtKB-SubCell"/>
</dbReference>
<dbReference type="GO" id="GO:0046872">
    <property type="term" value="F:metal ion binding"/>
    <property type="evidence" value="ECO:0007669"/>
    <property type="project" value="UniProtKB-KW"/>
</dbReference>
<dbReference type="GO" id="GO:0008963">
    <property type="term" value="F:phospho-N-acetylmuramoyl-pentapeptide-transferase activity"/>
    <property type="evidence" value="ECO:0007669"/>
    <property type="project" value="UniProtKB-UniRule"/>
</dbReference>
<dbReference type="GO" id="GO:0051992">
    <property type="term" value="F:UDP-N-acetylmuramoyl-L-alanyl-D-glutamyl-meso-2,6-diaminopimelyl-D-alanyl-D-alanine:undecaprenyl-phosphate transferase activity"/>
    <property type="evidence" value="ECO:0007669"/>
    <property type="project" value="RHEA"/>
</dbReference>
<dbReference type="GO" id="GO:0051301">
    <property type="term" value="P:cell division"/>
    <property type="evidence" value="ECO:0007669"/>
    <property type="project" value="UniProtKB-KW"/>
</dbReference>
<dbReference type="GO" id="GO:0071555">
    <property type="term" value="P:cell wall organization"/>
    <property type="evidence" value="ECO:0007669"/>
    <property type="project" value="UniProtKB-KW"/>
</dbReference>
<dbReference type="GO" id="GO:0009252">
    <property type="term" value="P:peptidoglycan biosynthetic process"/>
    <property type="evidence" value="ECO:0007669"/>
    <property type="project" value="UniProtKB-UniRule"/>
</dbReference>
<dbReference type="GO" id="GO:0008360">
    <property type="term" value="P:regulation of cell shape"/>
    <property type="evidence" value="ECO:0007669"/>
    <property type="project" value="UniProtKB-KW"/>
</dbReference>
<dbReference type="CDD" id="cd06852">
    <property type="entry name" value="GT_MraY"/>
    <property type="match status" value="1"/>
</dbReference>
<dbReference type="HAMAP" id="MF_00038">
    <property type="entry name" value="MraY"/>
    <property type="match status" value="1"/>
</dbReference>
<dbReference type="InterPro" id="IPR000715">
    <property type="entry name" value="Glycosyl_transferase_4"/>
</dbReference>
<dbReference type="InterPro" id="IPR003524">
    <property type="entry name" value="PNAcMuramoyl-5peptid_Trfase"/>
</dbReference>
<dbReference type="InterPro" id="IPR018480">
    <property type="entry name" value="PNAcMuramoyl-5peptid_Trfase_CS"/>
</dbReference>
<dbReference type="NCBIfam" id="TIGR00445">
    <property type="entry name" value="mraY"/>
    <property type="match status" value="1"/>
</dbReference>
<dbReference type="PANTHER" id="PTHR22926">
    <property type="entry name" value="PHOSPHO-N-ACETYLMURAMOYL-PENTAPEPTIDE-TRANSFERASE"/>
    <property type="match status" value="1"/>
</dbReference>
<dbReference type="PANTHER" id="PTHR22926:SF5">
    <property type="entry name" value="PHOSPHO-N-ACETYLMURAMOYL-PENTAPEPTIDE-TRANSFERASE HOMOLOG"/>
    <property type="match status" value="1"/>
</dbReference>
<dbReference type="Pfam" id="PF00953">
    <property type="entry name" value="Glycos_transf_4"/>
    <property type="match status" value="1"/>
</dbReference>
<dbReference type="PROSITE" id="PS01347">
    <property type="entry name" value="MRAY_1"/>
    <property type="match status" value="1"/>
</dbReference>
<dbReference type="PROSITE" id="PS01348">
    <property type="entry name" value="MRAY_2"/>
    <property type="match status" value="1"/>
</dbReference>
<accession>Q6AJ51</accession>
<reference key="1">
    <citation type="journal article" date="2004" name="Environ. Microbiol.">
        <title>The genome of Desulfotalea psychrophila, a sulfate-reducing bacterium from permanently cold Arctic sediments.</title>
        <authorList>
            <person name="Rabus R."/>
            <person name="Ruepp A."/>
            <person name="Frickey T."/>
            <person name="Rattei T."/>
            <person name="Fartmann B."/>
            <person name="Stark M."/>
            <person name="Bauer M."/>
            <person name="Zibat A."/>
            <person name="Lombardot T."/>
            <person name="Becker I."/>
            <person name="Amann J."/>
            <person name="Gellner K."/>
            <person name="Teeling H."/>
            <person name="Leuschner W.D."/>
            <person name="Gloeckner F.-O."/>
            <person name="Lupas A.N."/>
            <person name="Amann R."/>
            <person name="Klenk H.-P."/>
        </authorList>
    </citation>
    <scope>NUCLEOTIDE SEQUENCE [LARGE SCALE GENOMIC DNA]</scope>
    <source>
        <strain>DSM 12343 / LSv54</strain>
    </source>
</reference>